<accession>B7GHT2</accession>
<proteinExistence type="inferred from homology"/>
<organism>
    <name type="scientific">Anoxybacillus flavithermus (strain DSM 21510 / WK1)</name>
    <dbReference type="NCBI Taxonomy" id="491915"/>
    <lineage>
        <taxon>Bacteria</taxon>
        <taxon>Bacillati</taxon>
        <taxon>Bacillota</taxon>
        <taxon>Bacilli</taxon>
        <taxon>Bacillales</taxon>
        <taxon>Anoxybacillaceae</taxon>
        <taxon>Anoxybacillus</taxon>
    </lineage>
</organism>
<comment type="function">
    <text evidence="1">Catalyzes the pyruvoyl-dependent decarboxylation of aspartate to produce beta-alanine.</text>
</comment>
<comment type="catalytic activity">
    <reaction evidence="1">
        <text>L-aspartate + H(+) = beta-alanine + CO2</text>
        <dbReference type="Rhea" id="RHEA:19497"/>
        <dbReference type="ChEBI" id="CHEBI:15378"/>
        <dbReference type="ChEBI" id="CHEBI:16526"/>
        <dbReference type="ChEBI" id="CHEBI:29991"/>
        <dbReference type="ChEBI" id="CHEBI:57966"/>
        <dbReference type="EC" id="4.1.1.11"/>
    </reaction>
</comment>
<comment type="cofactor">
    <cofactor evidence="1">
        <name>pyruvate</name>
        <dbReference type="ChEBI" id="CHEBI:15361"/>
    </cofactor>
    <text evidence="1">Binds 1 pyruvoyl group covalently per subunit.</text>
</comment>
<comment type="pathway">
    <text evidence="1">Cofactor biosynthesis; (R)-pantothenate biosynthesis; beta-alanine from L-aspartate: step 1/1.</text>
</comment>
<comment type="subunit">
    <text evidence="1">Heterooctamer of four alpha and four beta subunits.</text>
</comment>
<comment type="subcellular location">
    <subcellularLocation>
        <location evidence="1">Cytoplasm</location>
    </subcellularLocation>
</comment>
<comment type="PTM">
    <text evidence="1">Is synthesized initially as an inactive proenzyme, which is activated by self-cleavage at a specific serine bond to produce a beta-subunit with a hydroxyl group at its C-terminus and an alpha-subunit with a pyruvoyl group at its N-terminus.</text>
</comment>
<comment type="similarity">
    <text evidence="1">Belongs to the PanD family.</text>
</comment>
<gene>
    <name evidence="1" type="primary">panD</name>
    <name type="ordered locus">Aflv_1128</name>
</gene>
<name>PAND_ANOFW</name>
<dbReference type="EC" id="4.1.1.11" evidence="1"/>
<dbReference type="EMBL" id="CP000922">
    <property type="protein sequence ID" value="ACJ33504.1"/>
    <property type="molecule type" value="Genomic_DNA"/>
</dbReference>
<dbReference type="RefSeq" id="WP_012574757.1">
    <property type="nucleotide sequence ID" value="NC_011567.1"/>
</dbReference>
<dbReference type="SMR" id="B7GHT2"/>
<dbReference type="STRING" id="491915.Aflv_1128"/>
<dbReference type="GeneID" id="7037385"/>
<dbReference type="KEGG" id="afl:Aflv_1128"/>
<dbReference type="PATRIC" id="fig|491915.6.peg.1151"/>
<dbReference type="eggNOG" id="COG0853">
    <property type="taxonomic scope" value="Bacteria"/>
</dbReference>
<dbReference type="HOGENOM" id="CLU_115305_2_0_9"/>
<dbReference type="UniPathway" id="UPA00028">
    <property type="reaction ID" value="UER00002"/>
</dbReference>
<dbReference type="Proteomes" id="UP000000742">
    <property type="component" value="Chromosome"/>
</dbReference>
<dbReference type="GO" id="GO:0005829">
    <property type="term" value="C:cytosol"/>
    <property type="evidence" value="ECO:0007669"/>
    <property type="project" value="TreeGrafter"/>
</dbReference>
<dbReference type="GO" id="GO:0004068">
    <property type="term" value="F:aspartate 1-decarboxylase activity"/>
    <property type="evidence" value="ECO:0007669"/>
    <property type="project" value="UniProtKB-UniRule"/>
</dbReference>
<dbReference type="GO" id="GO:0006523">
    <property type="term" value="P:alanine biosynthetic process"/>
    <property type="evidence" value="ECO:0007669"/>
    <property type="project" value="InterPro"/>
</dbReference>
<dbReference type="GO" id="GO:0015940">
    <property type="term" value="P:pantothenate biosynthetic process"/>
    <property type="evidence" value="ECO:0007669"/>
    <property type="project" value="UniProtKB-UniRule"/>
</dbReference>
<dbReference type="CDD" id="cd06919">
    <property type="entry name" value="Asp_decarbox"/>
    <property type="match status" value="1"/>
</dbReference>
<dbReference type="Gene3D" id="2.40.40.20">
    <property type="match status" value="1"/>
</dbReference>
<dbReference type="HAMAP" id="MF_00446">
    <property type="entry name" value="PanD"/>
    <property type="match status" value="1"/>
</dbReference>
<dbReference type="InterPro" id="IPR009010">
    <property type="entry name" value="Asp_de-COase-like_dom_sf"/>
</dbReference>
<dbReference type="InterPro" id="IPR003190">
    <property type="entry name" value="Asp_decarbox"/>
</dbReference>
<dbReference type="NCBIfam" id="TIGR00223">
    <property type="entry name" value="panD"/>
    <property type="match status" value="1"/>
</dbReference>
<dbReference type="PANTHER" id="PTHR21012">
    <property type="entry name" value="ASPARTATE 1-DECARBOXYLASE"/>
    <property type="match status" value="1"/>
</dbReference>
<dbReference type="PANTHER" id="PTHR21012:SF0">
    <property type="entry name" value="ASPARTATE 1-DECARBOXYLASE"/>
    <property type="match status" value="1"/>
</dbReference>
<dbReference type="Pfam" id="PF02261">
    <property type="entry name" value="Asp_decarbox"/>
    <property type="match status" value="1"/>
</dbReference>
<dbReference type="PIRSF" id="PIRSF006246">
    <property type="entry name" value="Asp_decarbox"/>
    <property type="match status" value="1"/>
</dbReference>
<dbReference type="SUPFAM" id="SSF50692">
    <property type="entry name" value="ADC-like"/>
    <property type="match status" value="1"/>
</dbReference>
<sequence length="127" mass="14140">MFRTLMNAKIHRARVTEANLNYVGSITIDEDILDAVGMVPNEKVQIVNNNNGARFETYIIPGERGSGVFCLNGAAARLVQKDDIIIVISYVLVPEEKLTSHRPKIAIMDEHNRIKELIVQEPAATVL</sequence>
<reference key="1">
    <citation type="journal article" date="2008" name="Genome Biol.">
        <title>Encapsulated in silica: genome, proteome and physiology of the thermophilic bacterium Anoxybacillus flavithermus WK1.</title>
        <authorList>
            <person name="Saw J.H."/>
            <person name="Mountain B.W."/>
            <person name="Feng L."/>
            <person name="Omelchenko M.V."/>
            <person name="Hou S."/>
            <person name="Saito J.A."/>
            <person name="Stott M.B."/>
            <person name="Li D."/>
            <person name="Zhao G."/>
            <person name="Wu J."/>
            <person name="Galperin M.Y."/>
            <person name="Koonin E.V."/>
            <person name="Makarova K.S."/>
            <person name="Wolf Y.I."/>
            <person name="Rigden D.J."/>
            <person name="Dunfield P.F."/>
            <person name="Wang L."/>
            <person name="Alam M."/>
        </authorList>
    </citation>
    <scope>NUCLEOTIDE SEQUENCE [LARGE SCALE GENOMIC DNA]</scope>
    <source>
        <strain>DSM 21510 / WK1</strain>
    </source>
</reference>
<evidence type="ECO:0000255" key="1">
    <source>
        <dbReference type="HAMAP-Rule" id="MF_00446"/>
    </source>
</evidence>
<protein>
    <recommendedName>
        <fullName evidence="1">Aspartate 1-decarboxylase</fullName>
        <ecNumber evidence="1">4.1.1.11</ecNumber>
    </recommendedName>
    <alternativeName>
        <fullName evidence="1">Aspartate alpha-decarboxylase</fullName>
    </alternativeName>
    <component>
        <recommendedName>
            <fullName evidence="1">Aspartate 1-decarboxylase beta chain</fullName>
        </recommendedName>
    </component>
    <component>
        <recommendedName>
            <fullName evidence="1">Aspartate 1-decarboxylase alpha chain</fullName>
        </recommendedName>
    </component>
</protein>
<keyword id="KW-0068">Autocatalytic cleavage</keyword>
<keyword id="KW-0963">Cytoplasm</keyword>
<keyword id="KW-0210">Decarboxylase</keyword>
<keyword id="KW-0456">Lyase</keyword>
<keyword id="KW-0566">Pantothenate biosynthesis</keyword>
<keyword id="KW-0670">Pyruvate</keyword>
<keyword id="KW-0704">Schiff base</keyword>
<keyword id="KW-0865">Zymogen</keyword>
<feature type="chain" id="PRO_1000124745" description="Aspartate 1-decarboxylase beta chain" evidence="1">
    <location>
        <begin position="1"/>
        <end position="24"/>
    </location>
</feature>
<feature type="chain" id="PRO_1000124746" description="Aspartate 1-decarboxylase alpha chain" evidence="1">
    <location>
        <begin position="25"/>
        <end position="127"/>
    </location>
</feature>
<feature type="active site" description="Schiff-base intermediate with substrate; via pyruvic acid" evidence="1">
    <location>
        <position position="25"/>
    </location>
</feature>
<feature type="active site" description="Proton donor" evidence="1">
    <location>
        <position position="58"/>
    </location>
</feature>
<feature type="binding site" evidence="1">
    <location>
        <position position="57"/>
    </location>
    <ligand>
        <name>substrate</name>
    </ligand>
</feature>
<feature type="binding site" evidence="1">
    <location>
        <begin position="73"/>
        <end position="75"/>
    </location>
    <ligand>
        <name>substrate</name>
    </ligand>
</feature>
<feature type="modified residue" description="Pyruvic acid (Ser)" evidence="1">
    <location>
        <position position="25"/>
    </location>
</feature>